<proteinExistence type="evidence at protein level"/>
<keyword id="KW-0903">Direct protein sequencing</keyword>
<keyword id="KW-1185">Reference proteome</keyword>
<keyword id="KW-0687">Ribonucleoprotein</keyword>
<keyword id="KW-0689">Ribosomal protein</keyword>
<keyword id="KW-0694">RNA-binding</keyword>
<keyword id="KW-0699">rRNA-binding</keyword>
<protein>
    <recommendedName>
        <fullName evidence="1">Small ribosomal subunit protein eS4</fullName>
    </recommendedName>
    <alternativeName>
        <fullName>30S ribosomal protein S4E</fullName>
    </alternativeName>
    <alternativeName>
        <fullName>HS3</fullName>
    </alternativeName>
</protein>
<dbReference type="EMBL" id="X55311">
    <property type="protein sequence ID" value="CAA39020.1"/>
    <property type="molecule type" value="Genomic_DNA"/>
</dbReference>
<dbReference type="EMBL" id="AY596297">
    <property type="protein sequence ID" value="AAV46517.1"/>
    <property type="molecule type" value="Genomic_DNA"/>
</dbReference>
<dbReference type="PIR" id="S10736">
    <property type="entry name" value="R3HS4"/>
</dbReference>
<dbReference type="RefSeq" id="WP_011223741.1">
    <property type="nucleotide sequence ID" value="NC_006396.1"/>
</dbReference>
<dbReference type="SMR" id="P22510"/>
<dbReference type="STRING" id="272569.rrnAC1600"/>
<dbReference type="PaxDb" id="272569-rrnAC1600"/>
<dbReference type="EnsemblBacteria" id="AAV46517">
    <property type="protein sequence ID" value="AAV46517"/>
    <property type="gene ID" value="rrnAC1600"/>
</dbReference>
<dbReference type="GeneID" id="40152565"/>
<dbReference type="KEGG" id="hma:rrnAC1600"/>
<dbReference type="PATRIC" id="fig|272569.17.peg.2289"/>
<dbReference type="eggNOG" id="arCOG04093">
    <property type="taxonomic scope" value="Archaea"/>
</dbReference>
<dbReference type="HOGENOM" id="CLU_060400_0_0_2"/>
<dbReference type="Proteomes" id="UP000001169">
    <property type="component" value="Chromosome I"/>
</dbReference>
<dbReference type="GO" id="GO:0022627">
    <property type="term" value="C:cytosolic small ribosomal subunit"/>
    <property type="evidence" value="ECO:0007669"/>
    <property type="project" value="TreeGrafter"/>
</dbReference>
<dbReference type="GO" id="GO:0019843">
    <property type="term" value="F:rRNA binding"/>
    <property type="evidence" value="ECO:0007669"/>
    <property type="project" value="UniProtKB-KW"/>
</dbReference>
<dbReference type="GO" id="GO:0003735">
    <property type="term" value="F:structural constituent of ribosome"/>
    <property type="evidence" value="ECO:0007669"/>
    <property type="project" value="InterPro"/>
</dbReference>
<dbReference type="GO" id="GO:0006412">
    <property type="term" value="P:translation"/>
    <property type="evidence" value="ECO:0007669"/>
    <property type="project" value="UniProtKB-UniRule"/>
</dbReference>
<dbReference type="CDD" id="cd06087">
    <property type="entry name" value="KOW_RPS4"/>
    <property type="match status" value="1"/>
</dbReference>
<dbReference type="Gene3D" id="2.30.30.30">
    <property type="match status" value="1"/>
</dbReference>
<dbReference type="Gene3D" id="2.40.50.740">
    <property type="match status" value="1"/>
</dbReference>
<dbReference type="Gene3D" id="3.10.290.10">
    <property type="entry name" value="RNA-binding S4 domain"/>
    <property type="match status" value="1"/>
</dbReference>
<dbReference type="HAMAP" id="MF_00485">
    <property type="entry name" value="Ribosomal_eS4"/>
    <property type="match status" value="1"/>
</dbReference>
<dbReference type="InterPro" id="IPR014722">
    <property type="entry name" value="Rib_uL2_dom2"/>
</dbReference>
<dbReference type="InterPro" id="IPR000876">
    <property type="entry name" value="Ribosomal_eS4"/>
</dbReference>
<dbReference type="InterPro" id="IPR013845">
    <property type="entry name" value="Ribosomal_eS4_central_region"/>
</dbReference>
<dbReference type="InterPro" id="IPR038237">
    <property type="entry name" value="Ribosomal_eS4_central_sf"/>
</dbReference>
<dbReference type="InterPro" id="IPR041982">
    <property type="entry name" value="Ribosomal_eS4_KOW"/>
</dbReference>
<dbReference type="InterPro" id="IPR013843">
    <property type="entry name" value="Ribosomal_eS4_N"/>
</dbReference>
<dbReference type="InterPro" id="IPR018199">
    <property type="entry name" value="Ribosomal_eS4_N_CS"/>
</dbReference>
<dbReference type="InterPro" id="IPR036986">
    <property type="entry name" value="S4_RNA-bd_sf"/>
</dbReference>
<dbReference type="NCBIfam" id="NF003312">
    <property type="entry name" value="PRK04313.1"/>
    <property type="match status" value="1"/>
</dbReference>
<dbReference type="PANTHER" id="PTHR11581">
    <property type="entry name" value="30S/40S RIBOSOMAL PROTEIN S4"/>
    <property type="match status" value="1"/>
</dbReference>
<dbReference type="PANTHER" id="PTHR11581:SF0">
    <property type="entry name" value="SMALL RIBOSOMAL SUBUNIT PROTEIN ES4"/>
    <property type="match status" value="1"/>
</dbReference>
<dbReference type="Pfam" id="PF00900">
    <property type="entry name" value="Ribosomal_S4e"/>
    <property type="match status" value="1"/>
</dbReference>
<dbReference type="Pfam" id="PF08071">
    <property type="entry name" value="RS4NT"/>
    <property type="match status" value="1"/>
</dbReference>
<dbReference type="PIRSF" id="PIRSF002116">
    <property type="entry name" value="Ribosomal_S4"/>
    <property type="match status" value="1"/>
</dbReference>
<dbReference type="SUPFAM" id="SSF55174">
    <property type="entry name" value="Alpha-L RNA-binding motif"/>
    <property type="match status" value="1"/>
</dbReference>
<dbReference type="PROSITE" id="PS00528">
    <property type="entry name" value="RIBOSOMAL_S4E"/>
    <property type="match status" value="1"/>
</dbReference>
<dbReference type="PROSITE" id="PS50889">
    <property type="entry name" value="S4"/>
    <property type="match status" value="1"/>
</dbReference>
<evidence type="ECO:0000305" key="1"/>
<accession>P22510</accession>
<accession>Q5V1T5</accession>
<comment type="similarity">
    <text evidence="1">Belongs to the eukaryotic ribosomal protein eS4 family.</text>
</comment>
<name>RS4E_HALMA</name>
<gene>
    <name type="primary">rps4e</name>
    <name type="ordered locus">rrnAC1600</name>
</gene>
<reference key="1">
    <citation type="journal article" date="1990" name="FEBS Lett.">
        <title>Nucleotide sequence of four genes encoding ribosomal proteins from the 'S10 and spectinomycin' operon equivalent region in the archaebacterium Halobacterium marismortui.</title>
        <authorList>
            <person name="Arndt E."/>
        </authorList>
    </citation>
    <scope>NUCLEOTIDE SEQUENCE [GENOMIC DNA]</scope>
    <scope>PARTIAL PROTEIN SEQUENCE</scope>
</reference>
<reference key="2">
    <citation type="journal article" date="2004" name="Genome Res.">
        <title>Genome sequence of Haloarcula marismortui: a halophilic archaeon from the Dead Sea.</title>
        <authorList>
            <person name="Baliga N.S."/>
            <person name="Bonneau R."/>
            <person name="Facciotti M.T."/>
            <person name="Pan M."/>
            <person name="Glusman G."/>
            <person name="Deutsch E.W."/>
            <person name="Shannon P."/>
            <person name="Chiu Y."/>
            <person name="Weng R.S."/>
            <person name="Gan R.R."/>
            <person name="Hung P."/>
            <person name="Date S.V."/>
            <person name="Marcotte E."/>
            <person name="Hood L."/>
            <person name="Ng W.V."/>
        </authorList>
    </citation>
    <scope>NUCLEOTIDE SEQUENCE [LARGE SCALE GENOMIC DNA]</scope>
    <source>
        <strain>ATCC 43049 / DSM 3752 / JCM 8966 / VKM B-1809</strain>
    </source>
</reference>
<feature type="initiator methionine" description="Removed">
    <location>
        <position position="1"/>
    </location>
</feature>
<feature type="chain" id="PRO_0000130846" description="Small ribosomal subunit protein eS4">
    <location>
        <begin position="2"/>
        <end position="234"/>
    </location>
</feature>
<feature type="domain" description="S4 RNA-binding">
    <location>
        <begin position="37"/>
        <end position="99"/>
    </location>
</feature>
<sequence length="234" mass="25247">MSNHQKRLSVPNSWPVERKTATFTVKAGAGPHGESGVPLLIVLRDVLGYADNRKEARYALNEDNVLINGKAISDEERPVGMFDILAFTEREEYYRVFPGEGGRLALTAIDPDAAQSKLGKIVTKTHVSGGDVQLGLHDGETLIVEDDQTYDAGDSIVVGNEDGEVVAHFEYEEGALVTAVDGAHAGEVGEVEEIQVTPGSAQNNVIVSQDEGEGFETVEEYVVVIDENFTGDDE</sequence>
<organism>
    <name type="scientific">Haloarcula marismortui (strain ATCC 43049 / DSM 3752 / JCM 8966 / VKM B-1809)</name>
    <name type="common">Halobacterium marismortui</name>
    <dbReference type="NCBI Taxonomy" id="272569"/>
    <lineage>
        <taxon>Archaea</taxon>
        <taxon>Methanobacteriati</taxon>
        <taxon>Methanobacteriota</taxon>
        <taxon>Stenosarchaea group</taxon>
        <taxon>Halobacteria</taxon>
        <taxon>Halobacteriales</taxon>
        <taxon>Haloarculaceae</taxon>
        <taxon>Haloarcula</taxon>
    </lineage>
</organism>